<keyword id="KW-0030">Aminoacyl-tRNA synthetase</keyword>
<keyword id="KW-0067">ATP-binding</keyword>
<keyword id="KW-0963">Cytoplasm</keyword>
<keyword id="KW-0436">Ligase</keyword>
<keyword id="KW-0547">Nucleotide-binding</keyword>
<keyword id="KW-0648">Protein biosynthesis</keyword>
<proteinExistence type="inferred from homology"/>
<protein>
    <recommendedName>
        <fullName evidence="1">Aspartate--tRNA ligase</fullName>
        <ecNumber evidence="1">6.1.1.12</ecNumber>
    </recommendedName>
    <alternativeName>
        <fullName evidence="1">Aspartyl-tRNA synthetase</fullName>
        <shortName evidence="1">AspRS</shortName>
    </alternativeName>
</protein>
<dbReference type="EC" id="6.1.1.12" evidence="1"/>
<dbReference type="EMBL" id="CP001139">
    <property type="protein sequence ID" value="ACH67107.1"/>
    <property type="molecule type" value="Genomic_DNA"/>
</dbReference>
<dbReference type="RefSeq" id="WP_012534202.1">
    <property type="nucleotide sequence ID" value="NC_011184.1"/>
</dbReference>
<dbReference type="SMR" id="B5FCP9"/>
<dbReference type="KEGG" id="vfm:VFMJ11_0990"/>
<dbReference type="HOGENOM" id="CLU_014330_3_2_6"/>
<dbReference type="Proteomes" id="UP000001857">
    <property type="component" value="Chromosome I"/>
</dbReference>
<dbReference type="GO" id="GO:0005737">
    <property type="term" value="C:cytoplasm"/>
    <property type="evidence" value="ECO:0007669"/>
    <property type="project" value="UniProtKB-SubCell"/>
</dbReference>
<dbReference type="GO" id="GO:0004815">
    <property type="term" value="F:aspartate-tRNA ligase activity"/>
    <property type="evidence" value="ECO:0007669"/>
    <property type="project" value="UniProtKB-UniRule"/>
</dbReference>
<dbReference type="GO" id="GO:0005524">
    <property type="term" value="F:ATP binding"/>
    <property type="evidence" value="ECO:0007669"/>
    <property type="project" value="UniProtKB-UniRule"/>
</dbReference>
<dbReference type="GO" id="GO:0003676">
    <property type="term" value="F:nucleic acid binding"/>
    <property type="evidence" value="ECO:0007669"/>
    <property type="project" value="InterPro"/>
</dbReference>
<dbReference type="GO" id="GO:0006422">
    <property type="term" value="P:aspartyl-tRNA aminoacylation"/>
    <property type="evidence" value="ECO:0007669"/>
    <property type="project" value="UniProtKB-UniRule"/>
</dbReference>
<dbReference type="CDD" id="cd00777">
    <property type="entry name" value="AspRS_core"/>
    <property type="match status" value="1"/>
</dbReference>
<dbReference type="CDD" id="cd04317">
    <property type="entry name" value="EcAspRS_like_N"/>
    <property type="match status" value="1"/>
</dbReference>
<dbReference type="FunFam" id="2.40.50.140:FF:000080">
    <property type="entry name" value="Aspartate--tRNA ligase"/>
    <property type="match status" value="1"/>
</dbReference>
<dbReference type="Gene3D" id="3.30.930.10">
    <property type="entry name" value="Bira Bifunctional Protein, Domain 2"/>
    <property type="match status" value="1"/>
</dbReference>
<dbReference type="Gene3D" id="3.30.1360.30">
    <property type="entry name" value="GAD-like domain"/>
    <property type="match status" value="1"/>
</dbReference>
<dbReference type="Gene3D" id="2.40.50.140">
    <property type="entry name" value="Nucleic acid-binding proteins"/>
    <property type="match status" value="1"/>
</dbReference>
<dbReference type="HAMAP" id="MF_00044">
    <property type="entry name" value="Asp_tRNA_synth_type1"/>
    <property type="match status" value="1"/>
</dbReference>
<dbReference type="InterPro" id="IPR004364">
    <property type="entry name" value="Aa-tRNA-synt_II"/>
</dbReference>
<dbReference type="InterPro" id="IPR006195">
    <property type="entry name" value="aa-tRNA-synth_II"/>
</dbReference>
<dbReference type="InterPro" id="IPR045864">
    <property type="entry name" value="aa-tRNA-synth_II/BPL/LPL"/>
</dbReference>
<dbReference type="InterPro" id="IPR004524">
    <property type="entry name" value="Asp-tRNA-ligase_1"/>
</dbReference>
<dbReference type="InterPro" id="IPR047089">
    <property type="entry name" value="Asp-tRNA-ligase_1_N"/>
</dbReference>
<dbReference type="InterPro" id="IPR002312">
    <property type="entry name" value="Asp/Asn-tRNA-synth_IIb"/>
</dbReference>
<dbReference type="InterPro" id="IPR047090">
    <property type="entry name" value="AspRS_core"/>
</dbReference>
<dbReference type="InterPro" id="IPR004115">
    <property type="entry name" value="GAD-like_sf"/>
</dbReference>
<dbReference type="InterPro" id="IPR029351">
    <property type="entry name" value="GAD_dom"/>
</dbReference>
<dbReference type="InterPro" id="IPR012340">
    <property type="entry name" value="NA-bd_OB-fold"/>
</dbReference>
<dbReference type="InterPro" id="IPR004365">
    <property type="entry name" value="NA-bd_OB_tRNA"/>
</dbReference>
<dbReference type="NCBIfam" id="TIGR00459">
    <property type="entry name" value="aspS_bact"/>
    <property type="match status" value="1"/>
</dbReference>
<dbReference type="NCBIfam" id="NF001750">
    <property type="entry name" value="PRK00476.1"/>
    <property type="match status" value="1"/>
</dbReference>
<dbReference type="PANTHER" id="PTHR22594:SF5">
    <property type="entry name" value="ASPARTATE--TRNA LIGASE, MITOCHONDRIAL"/>
    <property type="match status" value="1"/>
</dbReference>
<dbReference type="PANTHER" id="PTHR22594">
    <property type="entry name" value="ASPARTYL/LYSYL-TRNA SYNTHETASE"/>
    <property type="match status" value="1"/>
</dbReference>
<dbReference type="Pfam" id="PF02938">
    <property type="entry name" value="GAD"/>
    <property type="match status" value="1"/>
</dbReference>
<dbReference type="Pfam" id="PF00152">
    <property type="entry name" value="tRNA-synt_2"/>
    <property type="match status" value="1"/>
</dbReference>
<dbReference type="Pfam" id="PF01336">
    <property type="entry name" value="tRNA_anti-codon"/>
    <property type="match status" value="1"/>
</dbReference>
<dbReference type="PRINTS" id="PR01042">
    <property type="entry name" value="TRNASYNTHASP"/>
</dbReference>
<dbReference type="SUPFAM" id="SSF55681">
    <property type="entry name" value="Class II aaRS and biotin synthetases"/>
    <property type="match status" value="1"/>
</dbReference>
<dbReference type="SUPFAM" id="SSF55261">
    <property type="entry name" value="GAD domain-like"/>
    <property type="match status" value="1"/>
</dbReference>
<dbReference type="SUPFAM" id="SSF50249">
    <property type="entry name" value="Nucleic acid-binding proteins"/>
    <property type="match status" value="1"/>
</dbReference>
<dbReference type="PROSITE" id="PS50862">
    <property type="entry name" value="AA_TRNA_LIGASE_II"/>
    <property type="match status" value="1"/>
</dbReference>
<comment type="function">
    <text evidence="1">Catalyzes the attachment of L-aspartate to tRNA(Asp) in a two-step reaction: L-aspartate is first activated by ATP to form Asp-AMP and then transferred to the acceptor end of tRNA(Asp).</text>
</comment>
<comment type="catalytic activity">
    <reaction evidence="1">
        <text>tRNA(Asp) + L-aspartate + ATP = L-aspartyl-tRNA(Asp) + AMP + diphosphate</text>
        <dbReference type="Rhea" id="RHEA:19649"/>
        <dbReference type="Rhea" id="RHEA-COMP:9660"/>
        <dbReference type="Rhea" id="RHEA-COMP:9678"/>
        <dbReference type="ChEBI" id="CHEBI:29991"/>
        <dbReference type="ChEBI" id="CHEBI:30616"/>
        <dbReference type="ChEBI" id="CHEBI:33019"/>
        <dbReference type="ChEBI" id="CHEBI:78442"/>
        <dbReference type="ChEBI" id="CHEBI:78516"/>
        <dbReference type="ChEBI" id="CHEBI:456215"/>
        <dbReference type="EC" id="6.1.1.12"/>
    </reaction>
</comment>
<comment type="subunit">
    <text evidence="1">Homodimer.</text>
</comment>
<comment type="subcellular location">
    <subcellularLocation>
        <location evidence="1">Cytoplasm</location>
    </subcellularLocation>
</comment>
<comment type="similarity">
    <text evidence="1">Belongs to the class-II aminoacyl-tRNA synthetase family. Type 1 subfamily.</text>
</comment>
<organism>
    <name type="scientific">Aliivibrio fischeri (strain MJ11)</name>
    <name type="common">Vibrio fischeri</name>
    <dbReference type="NCBI Taxonomy" id="388396"/>
    <lineage>
        <taxon>Bacteria</taxon>
        <taxon>Pseudomonadati</taxon>
        <taxon>Pseudomonadota</taxon>
        <taxon>Gammaproteobacteria</taxon>
        <taxon>Vibrionales</taxon>
        <taxon>Vibrionaceae</taxon>
        <taxon>Aliivibrio</taxon>
    </lineage>
</organism>
<name>SYD_ALIFM</name>
<evidence type="ECO:0000255" key="1">
    <source>
        <dbReference type="HAMAP-Rule" id="MF_00044"/>
    </source>
</evidence>
<accession>B5FCP9</accession>
<reference key="1">
    <citation type="submission" date="2008-08" db="EMBL/GenBank/DDBJ databases">
        <title>Complete sequence of Vibrio fischeri strain MJ11.</title>
        <authorList>
            <person name="Mandel M.J."/>
            <person name="Stabb E.V."/>
            <person name="Ruby E.G."/>
            <person name="Ferriera S."/>
            <person name="Johnson J."/>
            <person name="Kravitz S."/>
            <person name="Beeson K."/>
            <person name="Sutton G."/>
            <person name="Rogers Y.-H."/>
            <person name="Friedman R."/>
            <person name="Frazier M."/>
            <person name="Venter J.C."/>
        </authorList>
    </citation>
    <scope>NUCLEOTIDE SEQUENCE [LARGE SCALE GENOMIC DNA]</scope>
    <source>
        <strain>MJ11</strain>
    </source>
</reference>
<gene>
    <name evidence="1" type="primary">aspS</name>
    <name type="ordered locus">VFMJ11_0990</name>
</gene>
<sequence length="591" mass="65804">MRTHYCGNLNKSLAGQTVELCGWVNRRRDLGGLIFIDMRDREGIVQVVVDPDMKDVFEVASQLRNEFCIKFTGEVRVRPDSQVNKDMATGEVELLATGLEIINRSAALPLDFNQTNSEEQRLKYRYIDLRRPEMSDRIKLRARASSFVRRFLDENLFLDIETPVLTKATPEGARDYLVPSRVHKGSFYALPQSPQLFKQLLMMSGFDRYYQIVKCFRDEDLRADRQPEFTQIDIETSFMTSQEVRNVTERLVHDMWKELLDVELGQFPVMPFSEAMRRFGSDKPDLRNPLELVDVADLVKDVDFKVFSGPANDEKGRVAVIRVSGGASLSRKQIDEYGNFVGIYGAKGLAWMKVNDRAAGFEGVQSPVAKFLNEEVINAILERTQAETGDIILFGADKAGIVSEAMGALRLKLGTDLELTDTSAWAPLWVVDFPMFEEDGEGNLHAMHHPFTSPLGVSAEELQANPAAANSDAYDMVINGYEVGGGSVRIHNAEMQTAVFGILGIEAQEQQEKFGFLLEALKYGTPPHAGLAFGLDRLAMLLCGTENIRDVIAFPKTTAAACLLTDAPSLANPASLEELAIAVKLAEKKDA</sequence>
<feature type="chain" id="PRO_1000091059" description="Aspartate--tRNA ligase">
    <location>
        <begin position="1"/>
        <end position="591"/>
    </location>
</feature>
<feature type="region of interest" description="Aspartate" evidence="1">
    <location>
        <begin position="195"/>
        <end position="198"/>
    </location>
</feature>
<feature type="binding site" evidence="1">
    <location>
        <position position="171"/>
    </location>
    <ligand>
        <name>L-aspartate</name>
        <dbReference type="ChEBI" id="CHEBI:29991"/>
    </ligand>
</feature>
<feature type="binding site" evidence="1">
    <location>
        <begin position="217"/>
        <end position="219"/>
    </location>
    <ligand>
        <name>ATP</name>
        <dbReference type="ChEBI" id="CHEBI:30616"/>
    </ligand>
</feature>
<feature type="binding site" evidence="1">
    <location>
        <position position="217"/>
    </location>
    <ligand>
        <name>L-aspartate</name>
        <dbReference type="ChEBI" id="CHEBI:29991"/>
    </ligand>
</feature>
<feature type="binding site" evidence="1">
    <location>
        <position position="226"/>
    </location>
    <ligand>
        <name>ATP</name>
        <dbReference type="ChEBI" id="CHEBI:30616"/>
    </ligand>
</feature>
<feature type="binding site" evidence="1">
    <location>
        <position position="448"/>
    </location>
    <ligand>
        <name>L-aspartate</name>
        <dbReference type="ChEBI" id="CHEBI:29991"/>
    </ligand>
</feature>
<feature type="binding site" evidence="1">
    <location>
        <position position="482"/>
    </location>
    <ligand>
        <name>ATP</name>
        <dbReference type="ChEBI" id="CHEBI:30616"/>
    </ligand>
</feature>
<feature type="binding site" evidence="1">
    <location>
        <position position="489"/>
    </location>
    <ligand>
        <name>L-aspartate</name>
        <dbReference type="ChEBI" id="CHEBI:29991"/>
    </ligand>
</feature>
<feature type="binding site" evidence="1">
    <location>
        <begin position="534"/>
        <end position="537"/>
    </location>
    <ligand>
        <name>ATP</name>
        <dbReference type="ChEBI" id="CHEBI:30616"/>
    </ligand>
</feature>